<accession>C0ZAS1</accession>
<protein>
    <recommendedName>
        <fullName evidence="1">UPF0297 protein BBR47_19030</fullName>
    </recommendedName>
</protein>
<comment type="similarity">
    <text evidence="1">Belongs to the UPF0297 family.</text>
</comment>
<name>Y1903_BREBN</name>
<organism>
    <name type="scientific">Brevibacillus brevis (strain 47 / JCM 6285 / NBRC 100599)</name>
    <dbReference type="NCBI Taxonomy" id="358681"/>
    <lineage>
        <taxon>Bacteria</taxon>
        <taxon>Bacillati</taxon>
        <taxon>Bacillota</taxon>
        <taxon>Bacilli</taxon>
        <taxon>Bacillales</taxon>
        <taxon>Paenibacillaceae</taxon>
        <taxon>Brevibacillus</taxon>
    </lineage>
</organism>
<dbReference type="EMBL" id="AP008955">
    <property type="protein sequence ID" value="BAH42880.1"/>
    <property type="molecule type" value="Genomic_DNA"/>
</dbReference>
<dbReference type="RefSeq" id="WP_012685618.1">
    <property type="nucleotide sequence ID" value="NC_012491.1"/>
</dbReference>
<dbReference type="SMR" id="C0ZAS1"/>
<dbReference type="STRING" id="358681.BBR47_19030"/>
<dbReference type="KEGG" id="bbe:BBR47_19030"/>
<dbReference type="eggNOG" id="COG4472">
    <property type="taxonomic scope" value="Bacteria"/>
</dbReference>
<dbReference type="HOGENOM" id="CLU_162466_0_0_9"/>
<dbReference type="Proteomes" id="UP000001877">
    <property type="component" value="Chromosome"/>
</dbReference>
<dbReference type="HAMAP" id="MF_01507">
    <property type="entry name" value="UPF0297"/>
    <property type="match status" value="1"/>
</dbReference>
<dbReference type="InterPro" id="IPR009309">
    <property type="entry name" value="IreB"/>
</dbReference>
<dbReference type="NCBIfam" id="NF003997">
    <property type="entry name" value="PRK05473.1"/>
    <property type="match status" value="1"/>
</dbReference>
<dbReference type="PANTHER" id="PTHR40067">
    <property type="entry name" value="UPF0297 PROTEIN YRZL"/>
    <property type="match status" value="1"/>
</dbReference>
<dbReference type="PANTHER" id="PTHR40067:SF1">
    <property type="entry name" value="UPF0297 PROTEIN YRZL"/>
    <property type="match status" value="1"/>
</dbReference>
<dbReference type="Pfam" id="PF06135">
    <property type="entry name" value="IreB"/>
    <property type="match status" value="1"/>
</dbReference>
<dbReference type="PIRSF" id="PIRSF037258">
    <property type="entry name" value="DUF965_bac"/>
    <property type="match status" value="1"/>
</dbReference>
<feature type="chain" id="PRO_1000185038" description="UPF0297 protein BBR47_19030">
    <location>
        <begin position="1"/>
        <end position="86"/>
    </location>
</feature>
<sequence length="86" mass="9742">MSSLDNTMKFTVPKEANTADVQETLTEVYKALQEKGYNPITQIVGYLLSGDPAFIPRHNNARSLIGKLERDKIIEELVTVYLSERK</sequence>
<keyword id="KW-1185">Reference proteome</keyword>
<proteinExistence type="inferred from homology"/>
<evidence type="ECO:0000255" key="1">
    <source>
        <dbReference type="HAMAP-Rule" id="MF_01507"/>
    </source>
</evidence>
<gene>
    <name type="ordered locus">BBR47_19030</name>
</gene>
<reference key="1">
    <citation type="submission" date="2005-03" db="EMBL/GenBank/DDBJ databases">
        <title>Brevibacillus brevis strain 47, complete genome.</title>
        <authorList>
            <person name="Hosoyama A."/>
            <person name="Yamada R."/>
            <person name="Hongo Y."/>
            <person name="Terui Y."/>
            <person name="Ankai A."/>
            <person name="Masuyama W."/>
            <person name="Sekiguchi M."/>
            <person name="Takeda T."/>
            <person name="Asano K."/>
            <person name="Ohji S."/>
            <person name="Ichikawa N."/>
            <person name="Narita S."/>
            <person name="Aoki N."/>
            <person name="Miura H."/>
            <person name="Matsushita S."/>
            <person name="Sekigawa T."/>
            <person name="Yamagata H."/>
            <person name="Yoshikawa H."/>
            <person name="Udaka S."/>
            <person name="Tanikawa S."/>
            <person name="Fujita N."/>
        </authorList>
    </citation>
    <scope>NUCLEOTIDE SEQUENCE [LARGE SCALE GENOMIC DNA]</scope>
    <source>
        <strain>47 / JCM 6285 / NBRC 100599</strain>
    </source>
</reference>